<protein>
    <recommendedName>
        <fullName evidence="6">Disease resistance protein RPP2A</fullName>
        <ecNumber evidence="2">3.2.2.6</ecNumber>
    </recommendedName>
</protein>
<comment type="function">
    <text evidence="4">Disease resistance protein that cooperates with RPP2B to confer resistance to Hyaloperonospora parasitica isolate Cala2.</text>
</comment>
<comment type="catalytic activity">
    <reaction evidence="2">
        <text>NAD(+) + H2O = ADP-D-ribose + nicotinamide + H(+)</text>
        <dbReference type="Rhea" id="RHEA:16301"/>
        <dbReference type="ChEBI" id="CHEBI:15377"/>
        <dbReference type="ChEBI" id="CHEBI:15378"/>
        <dbReference type="ChEBI" id="CHEBI:17154"/>
        <dbReference type="ChEBI" id="CHEBI:57540"/>
        <dbReference type="ChEBI" id="CHEBI:57967"/>
        <dbReference type="EC" id="3.2.2.6"/>
    </reaction>
    <physiologicalReaction direction="left-to-right" evidence="2">
        <dbReference type="Rhea" id="RHEA:16302"/>
    </physiologicalReaction>
</comment>
<comment type="domain">
    <text evidence="2">The TIR domain mediates NAD(+) hydrolase (NADase) activity. Self-association of TIR domains is required for NADase activity.</text>
</comment>
<comment type="similarity">
    <text evidence="6">Belongs to the disease resistance TIR-NB-LRR family.</text>
</comment>
<comment type="sequence caution" evidence="6">
    <conflict type="erroneous initiation">
        <sequence resource="EMBL-CDS" id="BAF01192"/>
    </conflict>
    <text>Truncated N-terminus.</text>
</comment>
<comment type="sequence caution" evidence="6">
    <conflict type="erroneous gene model prediction">
        <sequence resource="EMBL-CDS" id="CAA16927"/>
    </conflict>
</comment>
<comment type="sequence caution" evidence="6">
    <conflict type="erroneous gene model prediction">
        <sequence resource="EMBL-CDS" id="CAB78952"/>
    </conflict>
</comment>
<comment type="online information" name="NIB-LRRS">
    <link uri="http://niblrrs.ucdavis.edu"/>
    <text>Functional and comparative genomics of disease resistance gene homologs</text>
</comment>
<accession>F4JT78</accession>
<accession>O49468</accession>
<accession>Q0WNV7</accession>
<sequence>MAASFCGSRRYDVFPSFSKVDVRRSFLAHLLKELDRRLINTFTDHGMERNLPIDAELLSAIAESRISIVIFSKNYASSTWCLDELVEIHTCYKELAQIVVPVFFNVHPSQVKKQTGEFGKVFGKTCKGKPENRKLRWMQALAAVANIAGYDLQNWPDEAVMIEMVADDVSKKLFKSSNDFSDIVGIEAHLEAMSSILRLKSEKARMVGISGPSGIGKTTIAKALFSKLSPQFHLRAFVTYKRTNQDDYDMKLCWIEKFLSEILGQKDLKVLDLGAVEQSLMHKKVLIILDDVDDLELLKTLVGQTGWFGFGSRIVVITQDRQLLKAHDINLIYEVAFPSAHLALEIFCQSAFGKIYPPSDFRELSVEFAYLAGNLPLDLRVLGLAMKGKHREEWIEMLPRLRNDLDGKFKKTLRNYLPVIRKRVSNEEGGREKLKKGNKKLDLDEEFPGGEIYSDEIPSPTSNWKDTDDFDSGDIIPIIADKSTTIIPNRRHSNDDWCSFCEFLRNRIPPLNPFKCSANDVIDFLRTRQVLGSTEALVDRLIFSSEAFGIKPEENPFRSQAVTSYLKAARDMTREKECILVFSCHDNLDVDETSFIEAISKELHKQGFIPLTYNLLGRENLDEEMLYGSRVGIMILSSSYVSSRQSLDHLVAVMEHWKTTDLVIIPIYFKVRLSDICGLKGRFEAAFLQLHMSLQEDRVQKWKAAMSEIVSIGGHEWTKGSQFILAEEVVRNASLRLYLKSSKNLLGILALLNHSQSTDVEIMGIWGIAGIGKTSIAREIFELHAPHYDFCYFLQDFHLMCQMKRPRQLREDFISKLFGEEKGLGASDVKPSFMRDWFHKKTILLVLDDVSNARDAEAVIGGFGWFSHGHRIILTSRSKQVLVQCKVKKPYEIQKLSDFESFRLCKQYLDGENPVISELISCSSGIPLALKLLVSSVSKQYITNMKDHLQSLRKDPPTQIQEAFRRSFDGLDENEKNIFLDLACFFRGQSKDYAVLLLDACGFFTYMGICELIDESLISLVDNKIEMPIPFQDMGRIIVHEEDEDPCERSRLWDSKDIVDVLTNNSGTEAIEGIFLDASDLTCELSPTVFGKMYNLRLLKFYCSTSGNQCKLTLPHGLDTLPDELSLLHWENYPLVYLPQKFNPVNLVELNMPYSNMEKLWEGKKNLEKLKNIKLSHSRELTDILMLSEALNLEHIDLEGCTSLIDVSMSIPCCGKLVSLNMKDCSRLRSLPSMVDLTTLKLLNLSGCSEFEDIQDFAPNLEEIYLAGTSIRELPLSIRNLTELVTLDLENCERLQEMPSLPVEIIRRT</sequence>
<keyword id="KW-0067">ATP-binding</keyword>
<keyword id="KW-0175">Coiled coil</keyword>
<keyword id="KW-0378">Hydrolase</keyword>
<keyword id="KW-0433">Leucine-rich repeat</keyword>
<keyword id="KW-0520">NAD</keyword>
<keyword id="KW-0547">Nucleotide-binding</keyword>
<keyword id="KW-0611">Plant defense</keyword>
<keyword id="KW-1185">Reference proteome</keyword>
<keyword id="KW-0677">Repeat</keyword>
<reference key="1">
    <citation type="journal article" date="1999" name="Nature">
        <title>Sequence and analysis of chromosome 4 of the plant Arabidopsis thaliana.</title>
        <authorList>
            <person name="Mayer K.F.X."/>
            <person name="Schueller C."/>
            <person name="Wambutt R."/>
            <person name="Murphy G."/>
            <person name="Volckaert G."/>
            <person name="Pohl T."/>
            <person name="Duesterhoeft A."/>
            <person name="Stiekema W."/>
            <person name="Entian K.-D."/>
            <person name="Terryn N."/>
            <person name="Harris B."/>
            <person name="Ansorge W."/>
            <person name="Brandt P."/>
            <person name="Grivell L.A."/>
            <person name="Rieger M."/>
            <person name="Weichselgartner M."/>
            <person name="de Simone V."/>
            <person name="Obermaier B."/>
            <person name="Mache R."/>
            <person name="Mueller M."/>
            <person name="Kreis M."/>
            <person name="Delseny M."/>
            <person name="Puigdomenech P."/>
            <person name="Watson M."/>
            <person name="Schmidtheini T."/>
            <person name="Reichert B."/>
            <person name="Portetelle D."/>
            <person name="Perez-Alonso M."/>
            <person name="Boutry M."/>
            <person name="Bancroft I."/>
            <person name="Vos P."/>
            <person name="Hoheisel J."/>
            <person name="Zimmermann W."/>
            <person name="Wedler H."/>
            <person name="Ridley P."/>
            <person name="Langham S.-A."/>
            <person name="McCullagh B."/>
            <person name="Bilham L."/>
            <person name="Robben J."/>
            <person name="van der Schueren J."/>
            <person name="Grymonprez B."/>
            <person name="Chuang Y.-J."/>
            <person name="Vandenbussche F."/>
            <person name="Braeken M."/>
            <person name="Weltjens I."/>
            <person name="Voet M."/>
            <person name="Bastiaens I."/>
            <person name="Aert R."/>
            <person name="Defoor E."/>
            <person name="Weitzenegger T."/>
            <person name="Bothe G."/>
            <person name="Ramsperger U."/>
            <person name="Hilbert H."/>
            <person name="Braun M."/>
            <person name="Holzer E."/>
            <person name="Brandt A."/>
            <person name="Peters S."/>
            <person name="van Staveren M."/>
            <person name="Dirkse W."/>
            <person name="Mooijman P."/>
            <person name="Klein Lankhorst R."/>
            <person name="Rose M."/>
            <person name="Hauf J."/>
            <person name="Koetter P."/>
            <person name="Berneiser S."/>
            <person name="Hempel S."/>
            <person name="Feldpausch M."/>
            <person name="Lamberth S."/>
            <person name="Van den Daele H."/>
            <person name="De Keyser A."/>
            <person name="Buysshaert C."/>
            <person name="Gielen J."/>
            <person name="Villarroel R."/>
            <person name="De Clercq R."/>
            <person name="van Montagu M."/>
            <person name="Rogers J."/>
            <person name="Cronin A."/>
            <person name="Quail M.A."/>
            <person name="Bray-Allen S."/>
            <person name="Clark L."/>
            <person name="Doggett J."/>
            <person name="Hall S."/>
            <person name="Kay M."/>
            <person name="Lennard N."/>
            <person name="McLay K."/>
            <person name="Mayes R."/>
            <person name="Pettett A."/>
            <person name="Rajandream M.A."/>
            <person name="Lyne M."/>
            <person name="Benes V."/>
            <person name="Rechmann S."/>
            <person name="Borkova D."/>
            <person name="Bloecker H."/>
            <person name="Scharfe M."/>
            <person name="Grimm M."/>
            <person name="Loehnert T.-H."/>
            <person name="Dose S."/>
            <person name="de Haan M."/>
            <person name="Maarse A.C."/>
            <person name="Schaefer M."/>
            <person name="Mueller-Auer S."/>
            <person name="Gabel C."/>
            <person name="Fuchs M."/>
            <person name="Fartmann B."/>
            <person name="Granderath K."/>
            <person name="Dauner D."/>
            <person name="Herzl A."/>
            <person name="Neumann S."/>
            <person name="Argiriou A."/>
            <person name="Vitale D."/>
            <person name="Liguori R."/>
            <person name="Piravandi E."/>
            <person name="Massenet O."/>
            <person name="Quigley F."/>
            <person name="Clabauld G."/>
            <person name="Muendlein A."/>
            <person name="Felber R."/>
            <person name="Schnabl S."/>
            <person name="Hiller R."/>
            <person name="Schmidt W."/>
            <person name="Lecharny A."/>
            <person name="Aubourg S."/>
            <person name="Chefdor F."/>
            <person name="Cooke R."/>
            <person name="Berger C."/>
            <person name="Monfort A."/>
            <person name="Casacuberta E."/>
            <person name="Gibbons T."/>
            <person name="Weber N."/>
            <person name="Vandenbol M."/>
            <person name="Bargues M."/>
            <person name="Terol J."/>
            <person name="Torres A."/>
            <person name="Perez-Perez A."/>
            <person name="Purnelle B."/>
            <person name="Bent E."/>
            <person name="Johnson S."/>
            <person name="Tacon D."/>
            <person name="Jesse T."/>
            <person name="Heijnen L."/>
            <person name="Schwarz S."/>
            <person name="Scholler P."/>
            <person name="Heber S."/>
            <person name="Francs P."/>
            <person name="Bielke C."/>
            <person name="Frishman D."/>
            <person name="Haase D."/>
            <person name="Lemcke K."/>
            <person name="Mewes H.-W."/>
            <person name="Stocker S."/>
            <person name="Zaccaria P."/>
            <person name="Bevan M."/>
            <person name="Wilson R.K."/>
            <person name="de la Bastide M."/>
            <person name="Habermann K."/>
            <person name="Parnell L."/>
            <person name="Dedhia N."/>
            <person name="Gnoj L."/>
            <person name="Schutz K."/>
            <person name="Huang E."/>
            <person name="Spiegel L."/>
            <person name="Sekhon M."/>
            <person name="Murray J."/>
            <person name="Sheet P."/>
            <person name="Cordes M."/>
            <person name="Abu-Threideh J."/>
            <person name="Stoneking T."/>
            <person name="Kalicki J."/>
            <person name="Graves T."/>
            <person name="Harmon G."/>
            <person name="Edwards J."/>
            <person name="Latreille P."/>
            <person name="Courtney L."/>
            <person name="Cloud J."/>
            <person name="Abbott A."/>
            <person name="Scott K."/>
            <person name="Johnson D."/>
            <person name="Minx P."/>
            <person name="Bentley D."/>
            <person name="Fulton B."/>
            <person name="Miller N."/>
            <person name="Greco T."/>
            <person name="Kemp K."/>
            <person name="Kramer J."/>
            <person name="Fulton L."/>
            <person name="Mardis E."/>
            <person name="Dante M."/>
            <person name="Pepin K."/>
            <person name="Hillier L.W."/>
            <person name="Nelson J."/>
            <person name="Spieth J."/>
            <person name="Ryan E."/>
            <person name="Andrews S."/>
            <person name="Geisel C."/>
            <person name="Layman D."/>
            <person name="Du H."/>
            <person name="Ali J."/>
            <person name="Berghoff A."/>
            <person name="Jones K."/>
            <person name="Drone K."/>
            <person name="Cotton M."/>
            <person name="Joshu C."/>
            <person name="Antonoiu B."/>
            <person name="Zidanic M."/>
            <person name="Strong C."/>
            <person name="Sun H."/>
            <person name="Lamar B."/>
            <person name="Yordan C."/>
            <person name="Ma P."/>
            <person name="Zhong J."/>
            <person name="Preston R."/>
            <person name="Vil D."/>
            <person name="Shekher M."/>
            <person name="Matero A."/>
            <person name="Shah R."/>
            <person name="Swaby I.K."/>
            <person name="O'Shaughnessy A."/>
            <person name="Rodriguez M."/>
            <person name="Hoffman J."/>
            <person name="Till S."/>
            <person name="Granat S."/>
            <person name="Shohdy N."/>
            <person name="Hasegawa A."/>
            <person name="Hameed A."/>
            <person name="Lodhi M."/>
            <person name="Johnson A."/>
            <person name="Chen E."/>
            <person name="Marra M.A."/>
            <person name="Martienssen R."/>
            <person name="McCombie W.R."/>
        </authorList>
    </citation>
    <scope>NUCLEOTIDE SEQUENCE [LARGE SCALE GENOMIC DNA]</scope>
    <source>
        <strain>cv. Columbia</strain>
    </source>
</reference>
<reference key="2">
    <citation type="journal article" date="2017" name="Plant J.">
        <title>Araport11: a complete reannotation of the Arabidopsis thaliana reference genome.</title>
        <authorList>
            <person name="Cheng C.Y."/>
            <person name="Krishnakumar V."/>
            <person name="Chan A.P."/>
            <person name="Thibaud-Nissen F."/>
            <person name="Schobel S."/>
            <person name="Town C.D."/>
        </authorList>
    </citation>
    <scope>GENOME REANNOTATION</scope>
    <source>
        <strain>cv. Columbia</strain>
    </source>
</reference>
<reference key="3">
    <citation type="submission" date="2006-07" db="EMBL/GenBank/DDBJ databases">
        <title>Large-scale analysis of RIKEN Arabidopsis full-length (RAFL) cDNAs.</title>
        <authorList>
            <person name="Totoki Y."/>
            <person name="Seki M."/>
            <person name="Ishida J."/>
            <person name="Nakajima M."/>
            <person name="Enju A."/>
            <person name="Kamiya A."/>
            <person name="Narusaka M."/>
            <person name="Shin-i T."/>
            <person name="Nakagawa M."/>
            <person name="Sakamoto N."/>
            <person name="Oishi K."/>
            <person name="Kohara Y."/>
            <person name="Kobayashi M."/>
            <person name="Toyoda A."/>
            <person name="Sakaki Y."/>
            <person name="Sakurai T."/>
            <person name="Iida K."/>
            <person name="Akiyama K."/>
            <person name="Satou M."/>
            <person name="Toyoda T."/>
            <person name="Konagaya A."/>
            <person name="Carninci P."/>
            <person name="Kawai J."/>
            <person name="Hayashizaki Y."/>
            <person name="Shinozaki K."/>
        </authorList>
    </citation>
    <scope>NUCLEOTIDE SEQUENCE [LARGE SCALE MRNA]</scope>
    <source>
        <strain>cv. Columbia</strain>
    </source>
</reference>
<reference key="4">
    <citation type="journal article" date="2004" name="Plant J.">
        <title>Two TIR:NB:LRR genes are required to specify resistance to Peronospora parasitica isolate Cala2 in Arabidopsis.</title>
        <authorList>
            <person name="Sinapidou E."/>
            <person name="Williams K."/>
            <person name="Nott L."/>
            <person name="Bahkt S."/>
            <person name="Toer M."/>
            <person name="Crute I."/>
            <person name="Bittner-Eddy P."/>
            <person name="Beynon J."/>
        </authorList>
    </citation>
    <scope>FUNCTION</scope>
</reference>
<feature type="chain" id="PRO_0000444556" description="Disease resistance protein RPP2A">
    <location>
        <begin position="1"/>
        <end position="1309"/>
    </location>
</feature>
<feature type="domain" description="TIR 1" evidence="2">
    <location>
        <begin position="9"/>
        <end position="173"/>
    </location>
</feature>
<feature type="domain" description="NB-ARC 1" evidence="1">
    <location>
        <begin position="187"/>
        <end position="418"/>
    </location>
</feature>
<feature type="domain" description="ALOG" evidence="3">
    <location>
        <begin position="488"/>
        <end position="585"/>
    </location>
</feature>
<feature type="domain" description="TIR 2" evidence="2">
    <location>
        <begin position="574"/>
        <end position="737"/>
    </location>
</feature>
<feature type="domain" description="NB-ARC 2" evidence="1">
    <location>
        <begin position="755"/>
        <end position="987"/>
    </location>
</feature>
<feature type="repeat" description="LRR 1" evidence="1">
    <location>
        <begin position="1145"/>
        <end position="1167"/>
    </location>
</feature>
<feature type="repeat" description="LRR 2" evidence="1">
    <location>
        <begin position="1168"/>
        <end position="1195"/>
    </location>
</feature>
<feature type="repeat" description="LRR 3" evidence="1">
    <location>
        <begin position="1214"/>
        <end position="1237"/>
    </location>
</feature>
<feature type="repeat" description="LRR 4" evidence="1">
    <location>
        <begin position="1238"/>
        <end position="1258"/>
    </location>
</feature>
<feature type="repeat" description="LRR 5" evidence="1">
    <location>
        <begin position="1259"/>
        <end position="1283"/>
    </location>
</feature>
<feature type="repeat" description="LRR 6" evidence="1">
    <location>
        <begin position="1285"/>
        <end position="1307"/>
    </location>
</feature>
<feature type="coiled-coil region" evidence="5">
    <location>
        <begin position="1114"/>
        <end position="1141"/>
    </location>
</feature>
<feature type="active site" evidence="2">
    <location>
        <position position="84"/>
    </location>
</feature>
<proteinExistence type="evidence at transcript level"/>
<gene>
    <name evidence="5" type="primary">RPP2A</name>
    <name evidence="7" type="ordered locus">At4g19500</name>
    <name evidence="8" type="ORF">F24J7.60</name>
</gene>
<name>RPP2A_ARATH</name>
<organism>
    <name type="scientific">Arabidopsis thaliana</name>
    <name type="common">Mouse-ear cress</name>
    <dbReference type="NCBI Taxonomy" id="3702"/>
    <lineage>
        <taxon>Eukaryota</taxon>
        <taxon>Viridiplantae</taxon>
        <taxon>Streptophyta</taxon>
        <taxon>Embryophyta</taxon>
        <taxon>Tracheophyta</taxon>
        <taxon>Spermatophyta</taxon>
        <taxon>Magnoliopsida</taxon>
        <taxon>eudicotyledons</taxon>
        <taxon>Gunneridae</taxon>
        <taxon>Pentapetalae</taxon>
        <taxon>rosids</taxon>
        <taxon>malvids</taxon>
        <taxon>Brassicales</taxon>
        <taxon>Brassicaceae</taxon>
        <taxon>Camelineae</taxon>
        <taxon>Arabidopsis</taxon>
    </lineage>
</organism>
<evidence type="ECO:0000255" key="1"/>
<evidence type="ECO:0000255" key="2">
    <source>
        <dbReference type="PROSITE-ProRule" id="PRU00204"/>
    </source>
</evidence>
<evidence type="ECO:0000255" key="3">
    <source>
        <dbReference type="PROSITE-ProRule" id="PRU01033"/>
    </source>
</evidence>
<evidence type="ECO:0000269" key="4">
    <source>
    </source>
</evidence>
<evidence type="ECO:0000303" key="5">
    <source>
    </source>
</evidence>
<evidence type="ECO:0000305" key="6"/>
<evidence type="ECO:0000312" key="7">
    <source>
        <dbReference type="Araport" id="AT4G19500"/>
    </source>
</evidence>
<evidence type="ECO:0000312" key="8">
    <source>
        <dbReference type="EMBL" id="CAA16927.2"/>
    </source>
</evidence>
<dbReference type="EC" id="3.2.2.6" evidence="2"/>
<dbReference type="EMBL" id="AL021768">
    <property type="protein sequence ID" value="CAA16927.2"/>
    <property type="status" value="ALT_SEQ"/>
    <property type="molecule type" value="Genomic_DNA"/>
</dbReference>
<dbReference type="EMBL" id="AL161551">
    <property type="protein sequence ID" value="CAB78952.1"/>
    <property type="status" value="ALT_SEQ"/>
    <property type="molecule type" value="Genomic_DNA"/>
</dbReference>
<dbReference type="EMBL" id="CP002687">
    <property type="protein sequence ID" value="AEE84190.1"/>
    <property type="molecule type" value="Genomic_DNA"/>
</dbReference>
<dbReference type="EMBL" id="AK229329">
    <property type="protein sequence ID" value="BAF01192.1"/>
    <property type="status" value="ALT_INIT"/>
    <property type="molecule type" value="mRNA"/>
</dbReference>
<dbReference type="PIR" id="T06143">
    <property type="entry name" value="T06143"/>
</dbReference>
<dbReference type="RefSeq" id="NP_193685.6">
    <property type="nucleotide sequence ID" value="NM_118070.7"/>
</dbReference>
<dbReference type="SMR" id="F4JT78"/>
<dbReference type="FunCoup" id="F4JT78">
    <property type="interactions" value="4"/>
</dbReference>
<dbReference type="IntAct" id="F4JT78">
    <property type="interactions" value="1"/>
</dbReference>
<dbReference type="STRING" id="3702.F4JT78"/>
<dbReference type="iPTMnet" id="F4JT78"/>
<dbReference type="PaxDb" id="3702-AT4G19500.1"/>
<dbReference type="ProteomicsDB" id="228076"/>
<dbReference type="EnsemblPlants" id="AT4G19500.1">
    <property type="protein sequence ID" value="AT4G19500.1"/>
    <property type="gene ID" value="AT4G19500"/>
</dbReference>
<dbReference type="GeneID" id="827691"/>
<dbReference type="Gramene" id="AT4G19500.1">
    <property type="protein sequence ID" value="AT4G19500.1"/>
    <property type="gene ID" value="AT4G19500"/>
</dbReference>
<dbReference type="KEGG" id="ath:AT4G19500"/>
<dbReference type="Araport" id="AT4G19500"/>
<dbReference type="TAIR" id="AT4G19500"/>
<dbReference type="HOGENOM" id="CLU_260879_0_0_1"/>
<dbReference type="InParanoid" id="F4JT78"/>
<dbReference type="PRO" id="PR:F4JT78"/>
<dbReference type="Proteomes" id="UP000006548">
    <property type="component" value="Chromosome 4"/>
</dbReference>
<dbReference type="ExpressionAtlas" id="F4JT78">
    <property type="expression patterns" value="baseline and differential"/>
</dbReference>
<dbReference type="GO" id="GO:0043531">
    <property type="term" value="F:ADP binding"/>
    <property type="evidence" value="ECO:0007669"/>
    <property type="project" value="InterPro"/>
</dbReference>
<dbReference type="GO" id="GO:0005524">
    <property type="term" value="F:ATP binding"/>
    <property type="evidence" value="ECO:0007669"/>
    <property type="project" value="UniProtKB-KW"/>
</dbReference>
<dbReference type="GO" id="GO:0016887">
    <property type="term" value="F:ATP hydrolysis activity"/>
    <property type="evidence" value="ECO:0007669"/>
    <property type="project" value="InterPro"/>
</dbReference>
<dbReference type="GO" id="GO:0061809">
    <property type="term" value="F:NAD+ nucleosidase activity, cyclic ADP-ribose generating"/>
    <property type="evidence" value="ECO:0007669"/>
    <property type="project" value="UniProtKB-EC"/>
</dbReference>
<dbReference type="GO" id="GO:0006952">
    <property type="term" value="P:defense response"/>
    <property type="evidence" value="ECO:0007669"/>
    <property type="project" value="UniProtKB-KW"/>
</dbReference>
<dbReference type="GO" id="GO:0007165">
    <property type="term" value="P:signal transduction"/>
    <property type="evidence" value="ECO:0007669"/>
    <property type="project" value="InterPro"/>
</dbReference>
<dbReference type="FunFam" id="3.40.50.10140:FF:000007">
    <property type="entry name" value="Disease resistance protein (TIR-NBS-LRR class)"/>
    <property type="match status" value="1"/>
</dbReference>
<dbReference type="FunFam" id="3.40.50.300:FF:001002">
    <property type="entry name" value="Disease resistance protein (TIR-NBS-LRR class)"/>
    <property type="match status" value="1"/>
</dbReference>
<dbReference type="FunFam" id="3.80.10.10:FF:000386">
    <property type="entry name" value="Disease resistance protein RPS4"/>
    <property type="match status" value="1"/>
</dbReference>
<dbReference type="Gene3D" id="3.40.50.300">
    <property type="entry name" value="P-loop containing nucleotide triphosphate hydrolases"/>
    <property type="match status" value="2"/>
</dbReference>
<dbReference type="Gene3D" id="3.80.10.10">
    <property type="entry name" value="Ribonuclease Inhibitor"/>
    <property type="match status" value="2"/>
</dbReference>
<dbReference type="Gene3D" id="3.40.50.10140">
    <property type="entry name" value="Toll/interleukin-1 receptor homology (TIR) domain"/>
    <property type="match status" value="2"/>
</dbReference>
<dbReference type="InterPro" id="IPR003593">
    <property type="entry name" value="AAA+_ATPase"/>
</dbReference>
<dbReference type="InterPro" id="IPR006936">
    <property type="entry name" value="ALOG_dom"/>
</dbReference>
<dbReference type="InterPro" id="IPR044974">
    <property type="entry name" value="Disease_R_plants"/>
</dbReference>
<dbReference type="InterPro" id="IPR011713">
    <property type="entry name" value="Leu-rich_rpt_3"/>
</dbReference>
<dbReference type="InterPro" id="IPR032675">
    <property type="entry name" value="LRR_dom_sf"/>
</dbReference>
<dbReference type="InterPro" id="IPR002182">
    <property type="entry name" value="NB-ARC"/>
</dbReference>
<dbReference type="InterPro" id="IPR027417">
    <property type="entry name" value="P-loop_NTPase"/>
</dbReference>
<dbReference type="InterPro" id="IPR000157">
    <property type="entry name" value="TIR_dom"/>
</dbReference>
<dbReference type="InterPro" id="IPR035897">
    <property type="entry name" value="Toll_tir_struct_dom_sf"/>
</dbReference>
<dbReference type="InterPro" id="IPR036390">
    <property type="entry name" value="WH_DNA-bd_sf"/>
</dbReference>
<dbReference type="PANTHER" id="PTHR11017:SF549">
    <property type="entry name" value="DISEASE RESISTANCE PROTEIN RPP2A"/>
    <property type="match status" value="1"/>
</dbReference>
<dbReference type="PANTHER" id="PTHR11017">
    <property type="entry name" value="LEUCINE-RICH REPEAT-CONTAINING PROTEIN"/>
    <property type="match status" value="1"/>
</dbReference>
<dbReference type="Pfam" id="PF04852">
    <property type="entry name" value="ALOG_dom"/>
    <property type="match status" value="1"/>
</dbReference>
<dbReference type="Pfam" id="PF07725">
    <property type="entry name" value="LRR_3"/>
    <property type="match status" value="1"/>
</dbReference>
<dbReference type="Pfam" id="PF00931">
    <property type="entry name" value="NB-ARC"/>
    <property type="match status" value="2"/>
</dbReference>
<dbReference type="Pfam" id="PF01582">
    <property type="entry name" value="TIR"/>
    <property type="match status" value="2"/>
</dbReference>
<dbReference type="Pfam" id="PF23282">
    <property type="entry name" value="WHD_ROQ1"/>
    <property type="match status" value="1"/>
</dbReference>
<dbReference type="PRINTS" id="PR00364">
    <property type="entry name" value="DISEASERSIST"/>
</dbReference>
<dbReference type="SMART" id="SM00382">
    <property type="entry name" value="AAA"/>
    <property type="match status" value="2"/>
</dbReference>
<dbReference type="SMART" id="SM00255">
    <property type="entry name" value="TIR"/>
    <property type="match status" value="2"/>
</dbReference>
<dbReference type="SUPFAM" id="SSF52058">
    <property type="entry name" value="L domain-like"/>
    <property type="match status" value="1"/>
</dbReference>
<dbReference type="SUPFAM" id="SSF52540">
    <property type="entry name" value="P-loop containing nucleoside triphosphate hydrolases"/>
    <property type="match status" value="2"/>
</dbReference>
<dbReference type="SUPFAM" id="SSF52200">
    <property type="entry name" value="Toll/Interleukin receptor TIR domain"/>
    <property type="match status" value="2"/>
</dbReference>
<dbReference type="SUPFAM" id="SSF46785">
    <property type="entry name" value="Winged helix' DNA-binding domain"/>
    <property type="match status" value="1"/>
</dbReference>
<dbReference type="PROSITE" id="PS51697">
    <property type="entry name" value="ALOG"/>
    <property type="match status" value="1"/>
</dbReference>
<dbReference type="PROSITE" id="PS50104">
    <property type="entry name" value="TIR"/>
    <property type="match status" value="2"/>
</dbReference>